<reference key="1">
    <citation type="journal article" date="2008" name="J. Bacteriol.">
        <title>The pangenome structure of Escherichia coli: comparative genomic analysis of E. coli commensal and pathogenic isolates.</title>
        <authorList>
            <person name="Rasko D.A."/>
            <person name="Rosovitz M.J."/>
            <person name="Myers G.S.A."/>
            <person name="Mongodin E.F."/>
            <person name="Fricke W.F."/>
            <person name="Gajer P."/>
            <person name="Crabtree J."/>
            <person name="Sebaihia M."/>
            <person name="Thomson N.R."/>
            <person name="Chaudhuri R."/>
            <person name="Henderson I.R."/>
            <person name="Sperandio V."/>
            <person name="Ravel J."/>
        </authorList>
    </citation>
    <scope>NUCLEOTIDE SEQUENCE [LARGE SCALE GENOMIC DNA]</scope>
    <source>
        <strain>E24377A / ETEC</strain>
    </source>
</reference>
<keyword id="KW-1003">Cell membrane</keyword>
<keyword id="KW-0472">Membrane</keyword>
<keyword id="KW-1185">Reference proteome</keyword>
<keyword id="KW-0812">Transmembrane</keyword>
<keyword id="KW-1133">Transmembrane helix</keyword>
<comment type="subcellular location">
    <subcellularLocation>
        <location evidence="1">Cell membrane</location>
        <topology evidence="1">Multi-pass membrane protein</topology>
    </subcellularLocation>
</comment>
<comment type="similarity">
    <text evidence="1">Belongs to the UPF0114 family.</text>
</comment>
<protein>
    <recommendedName>
        <fullName evidence="1">UPF0114 protein YqhA</fullName>
    </recommendedName>
</protein>
<organism>
    <name type="scientific">Escherichia coli O139:H28 (strain E24377A / ETEC)</name>
    <dbReference type="NCBI Taxonomy" id="331111"/>
    <lineage>
        <taxon>Bacteria</taxon>
        <taxon>Pseudomonadati</taxon>
        <taxon>Pseudomonadota</taxon>
        <taxon>Gammaproteobacteria</taxon>
        <taxon>Enterobacterales</taxon>
        <taxon>Enterobacteriaceae</taxon>
        <taxon>Escherichia</taxon>
    </lineage>
</organism>
<proteinExistence type="inferred from homology"/>
<sequence length="164" mass="18641">MERFLENAMYASRWLLAPVYFGLSLALVALALKFFQEIIHVLPNIFSMAESDLILVLLSLVDMTLVGGLLVMVMFSGYENFVSQLDISENKEKLNWLGKMDATSLKNKVAASIVAISSIHLLRVFMDAKNVPDNKLMWYVIIHLTFVLSAFVMGYLDRLTRHNH</sequence>
<dbReference type="EMBL" id="CP000800">
    <property type="protein sequence ID" value="ABV19542.1"/>
    <property type="molecule type" value="Genomic_DNA"/>
</dbReference>
<dbReference type="RefSeq" id="WP_000439331.1">
    <property type="nucleotide sequence ID" value="NC_009801.1"/>
</dbReference>
<dbReference type="KEGG" id="ecw:EcE24377A_3471"/>
<dbReference type="HOGENOM" id="CLU_097887_1_1_6"/>
<dbReference type="Proteomes" id="UP000001122">
    <property type="component" value="Chromosome"/>
</dbReference>
<dbReference type="GO" id="GO:0005886">
    <property type="term" value="C:plasma membrane"/>
    <property type="evidence" value="ECO:0007669"/>
    <property type="project" value="UniProtKB-SubCell"/>
</dbReference>
<dbReference type="HAMAP" id="MF_00143">
    <property type="entry name" value="UPF0114"/>
    <property type="match status" value="1"/>
</dbReference>
<dbReference type="InterPro" id="IPR005134">
    <property type="entry name" value="UPF0114"/>
</dbReference>
<dbReference type="InterPro" id="IPR020761">
    <property type="entry name" value="UPF0114_bac"/>
</dbReference>
<dbReference type="NCBIfam" id="TIGR00645">
    <property type="entry name" value="HI0507"/>
    <property type="match status" value="1"/>
</dbReference>
<dbReference type="PANTHER" id="PTHR38596">
    <property type="entry name" value="UPF0114 PROTEIN YQHA"/>
    <property type="match status" value="1"/>
</dbReference>
<dbReference type="PANTHER" id="PTHR38596:SF1">
    <property type="entry name" value="UPF0114 PROTEIN YQHA"/>
    <property type="match status" value="1"/>
</dbReference>
<dbReference type="Pfam" id="PF03350">
    <property type="entry name" value="UPF0114"/>
    <property type="match status" value="1"/>
</dbReference>
<gene>
    <name evidence="1" type="primary">yqhA</name>
    <name type="ordered locus">EcE24377A_3471</name>
</gene>
<name>YQHA_ECO24</name>
<evidence type="ECO:0000255" key="1">
    <source>
        <dbReference type="HAMAP-Rule" id="MF_00143"/>
    </source>
</evidence>
<feature type="chain" id="PRO_1000057935" description="UPF0114 protein YqhA">
    <location>
        <begin position="1"/>
        <end position="164"/>
    </location>
</feature>
<feature type="transmembrane region" description="Helical" evidence="1">
    <location>
        <begin position="15"/>
        <end position="35"/>
    </location>
</feature>
<feature type="transmembrane region" description="Helical" evidence="1">
    <location>
        <begin position="53"/>
        <end position="73"/>
    </location>
</feature>
<feature type="transmembrane region" description="Helical" evidence="1">
    <location>
        <begin position="136"/>
        <end position="156"/>
    </location>
</feature>
<accession>A7ZRN9</accession>